<gene>
    <name evidence="1" type="primary">psbI</name>
</gene>
<reference key="1">
    <citation type="submission" date="2007-03" db="EMBL/GenBank/DDBJ databases">
        <title>Sequencing analysis of Lepidium virginicum JO26 chloroplast DNA.</title>
        <authorList>
            <person name="Hosouchi T."/>
            <person name="Tsuruoka H."/>
            <person name="Kotani H."/>
        </authorList>
    </citation>
    <scope>NUCLEOTIDE SEQUENCE [LARGE SCALE GENOMIC DNA]</scope>
</reference>
<dbReference type="EMBL" id="AP009374">
    <property type="protein sequence ID" value="BAF50445.1"/>
    <property type="molecule type" value="Genomic_DNA"/>
</dbReference>
<dbReference type="RefSeq" id="YP_001123621.1">
    <property type="nucleotide sequence ID" value="NC_009273.1"/>
</dbReference>
<dbReference type="SMR" id="A4QL90"/>
<dbReference type="GeneID" id="4961957"/>
<dbReference type="GO" id="GO:0009535">
    <property type="term" value="C:chloroplast thylakoid membrane"/>
    <property type="evidence" value="ECO:0007669"/>
    <property type="project" value="UniProtKB-SubCell"/>
</dbReference>
<dbReference type="GO" id="GO:0009539">
    <property type="term" value="C:photosystem II reaction center"/>
    <property type="evidence" value="ECO:0007669"/>
    <property type="project" value="InterPro"/>
</dbReference>
<dbReference type="GO" id="GO:0015979">
    <property type="term" value="P:photosynthesis"/>
    <property type="evidence" value="ECO:0007669"/>
    <property type="project" value="UniProtKB-UniRule"/>
</dbReference>
<dbReference type="HAMAP" id="MF_01316">
    <property type="entry name" value="PSII_PsbI"/>
    <property type="match status" value="1"/>
</dbReference>
<dbReference type="InterPro" id="IPR003686">
    <property type="entry name" value="PSII_PsbI"/>
</dbReference>
<dbReference type="InterPro" id="IPR037271">
    <property type="entry name" value="PSII_PsbI_sf"/>
</dbReference>
<dbReference type="PANTHER" id="PTHR35772">
    <property type="entry name" value="PHOTOSYSTEM II REACTION CENTER PROTEIN I"/>
    <property type="match status" value="1"/>
</dbReference>
<dbReference type="PANTHER" id="PTHR35772:SF1">
    <property type="entry name" value="PHOTOSYSTEM II REACTION CENTER PROTEIN I"/>
    <property type="match status" value="1"/>
</dbReference>
<dbReference type="Pfam" id="PF02532">
    <property type="entry name" value="PsbI"/>
    <property type="match status" value="1"/>
</dbReference>
<dbReference type="SUPFAM" id="SSF161041">
    <property type="entry name" value="Photosystem II reaction center protein I, PsbI"/>
    <property type="match status" value="1"/>
</dbReference>
<protein>
    <recommendedName>
        <fullName evidence="1">Photosystem II reaction center protein I</fullName>
        <shortName evidence="1">PSII-I</shortName>
    </recommendedName>
    <alternativeName>
        <fullName evidence="1">PSII 4.8 kDa protein</fullName>
    </alternativeName>
</protein>
<feature type="chain" id="PRO_0000298320" description="Photosystem II reaction center protein I">
    <location>
        <begin position="1"/>
        <end position="36"/>
    </location>
</feature>
<feature type="transmembrane region" description="Helical" evidence="1">
    <location>
        <begin position="4"/>
        <end position="24"/>
    </location>
</feature>
<keyword id="KW-0150">Chloroplast</keyword>
<keyword id="KW-0472">Membrane</keyword>
<keyword id="KW-0602">Photosynthesis</keyword>
<keyword id="KW-0604">Photosystem II</keyword>
<keyword id="KW-0934">Plastid</keyword>
<keyword id="KW-0674">Reaction center</keyword>
<keyword id="KW-0793">Thylakoid</keyword>
<keyword id="KW-0812">Transmembrane</keyword>
<keyword id="KW-1133">Transmembrane helix</keyword>
<geneLocation type="chloroplast"/>
<organism>
    <name type="scientific">Lepidium virginicum</name>
    <name type="common">Virginia pepperweed</name>
    <dbReference type="NCBI Taxonomy" id="59292"/>
    <lineage>
        <taxon>Eukaryota</taxon>
        <taxon>Viridiplantae</taxon>
        <taxon>Streptophyta</taxon>
        <taxon>Embryophyta</taxon>
        <taxon>Tracheophyta</taxon>
        <taxon>Spermatophyta</taxon>
        <taxon>Magnoliopsida</taxon>
        <taxon>eudicotyledons</taxon>
        <taxon>Gunneridae</taxon>
        <taxon>Pentapetalae</taxon>
        <taxon>rosids</taxon>
        <taxon>malvids</taxon>
        <taxon>Brassicales</taxon>
        <taxon>Brassicaceae</taxon>
        <taxon>Lepidieae</taxon>
        <taxon>Lepidium</taxon>
    </lineage>
</organism>
<sequence>MLTLKLFVYTVVIFFVSLFKFGFLSNDPGRNPGREE</sequence>
<comment type="function">
    <text evidence="1">One of the components of the core complex of photosystem II (PSII), required for its stability and/or assembly. PSII is a light-driven water:plastoquinone oxidoreductase that uses light energy to abstract electrons from H(2)O, generating O(2) and a proton gradient subsequently used for ATP formation. It consists of a core antenna complex that captures photons, and an electron transfer chain that converts photonic excitation into a charge separation.</text>
</comment>
<comment type="subunit">
    <text evidence="1">PSII is composed of 1 copy each of membrane proteins PsbA, PsbB, PsbC, PsbD, PsbE, PsbF, PsbH, PsbI, PsbJ, PsbK, PsbL, PsbM, PsbT, PsbX, PsbY, PsbZ, Psb30/Ycf12, at least 3 peripheral proteins of the oxygen-evolving complex and a large number of cofactors. It forms dimeric complexes.</text>
</comment>
<comment type="subcellular location">
    <subcellularLocation>
        <location evidence="1">Plastid</location>
        <location evidence="1">Chloroplast thylakoid membrane</location>
        <topology evidence="1">Single-pass membrane protein</topology>
    </subcellularLocation>
</comment>
<comment type="similarity">
    <text evidence="1">Belongs to the PsbI family.</text>
</comment>
<proteinExistence type="inferred from homology"/>
<evidence type="ECO:0000255" key="1">
    <source>
        <dbReference type="HAMAP-Rule" id="MF_01316"/>
    </source>
</evidence>
<name>PSBI_LEPVR</name>
<accession>A4QL90</accession>